<sequence length="171" mass="18791">MPVFGLAALKLNWEALSTPKFRVTFAQWVCSLLMWSLMASYSKHGEFKFVVVFGLVMWGLASTYLVYQLLNGPPLAPIVEFWANVAAGSLAFICLVLASATCNRAVGEPQTKVCSGELKPKASAAFAFLLLCAYGGLAYLSWRTWRNPPTIASYALHDDPEFAQPLHSSHK</sequence>
<reference key="1">
    <citation type="journal article" date="2012" name="PLoS ONE">
        <title>Broad phylogenomic sampling and the sister lineage of land plants.</title>
        <authorList>
            <person name="Timme R.E."/>
            <person name="Bachvaroff T.R."/>
            <person name="Delwiche C.F."/>
        </authorList>
    </citation>
    <scope>NUCLEOTIDE SEQUENCE [MRNA]</scope>
    <source>
        <strain>cv. UTEX 2591</strain>
    </source>
</reference>
<reference key="2">
    <citation type="journal article" date="2014" name="Plant Physiol.">
        <title>Functional and evolutionary analysis of the CASPARIAN STRIP MEMBRANE DOMAIN PROTEIN family.</title>
        <authorList>
            <person name="Roppolo D."/>
            <person name="Boeckmann B."/>
            <person name="Pfister A."/>
            <person name="Boutet E."/>
            <person name="Rubio M.C."/>
            <person name="Denervaud-Tendon V."/>
            <person name="Vermeer J.E."/>
            <person name="Gheyselinck J."/>
            <person name="Xenarios I."/>
            <person name="Geldner N."/>
        </authorList>
    </citation>
    <scope>GENE FAMILY</scope>
    <scope>NOMENCLATURE</scope>
</reference>
<evidence type="ECO:0000250" key="1"/>
<evidence type="ECO:0000255" key="2"/>
<evidence type="ECO:0000305" key="3"/>
<feature type="chain" id="PRO_0000418715" description="CASP-like protein 0U2">
    <location>
        <begin position="1"/>
        <end position="171"/>
    </location>
</feature>
<feature type="topological domain" description="Cytoplasmic" evidence="2">
    <location>
        <begin position="1"/>
        <end position="22"/>
    </location>
</feature>
<feature type="transmembrane region" description="Helical" evidence="2">
    <location>
        <begin position="23"/>
        <end position="42"/>
    </location>
</feature>
<feature type="topological domain" description="Extracellular" evidence="2">
    <location>
        <begin position="43"/>
        <end position="48"/>
    </location>
</feature>
<feature type="transmembrane region" description="Helical" evidence="2">
    <location>
        <begin position="49"/>
        <end position="69"/>
    </location>
</feature>
<feature type="topological domain" description="Cytoplasmic" evidence="2">
    <location>
        <begin position="70"/>
        <end position="77"/>
    </location>
</feature>
<feature type="transmembrane region" description="Helical" evidence="2">
    <location>
        <begin position="78"/>
        <end position="98"/>
    </location>
</feature>
<feature type="topological domain" description="Extracellular" evidence="2">
    <location>
        <begin position="99"/>
        <end position="121"/>
    </location>
</feature>
<feature type="transmembrane region" description="Helical" evidence="2">
    <location>
        <begin position="122"/>
        <end position="142"/>
    </location>
</feature>
<feature type="topological domain" description="Cytoplasmic" evidence="2">
    <location>
        <begin position="143"/>
        <end position="171"/>
    </location>
</feature>
<accession>P0DI73</accession>
<name>CSPL2_CHLAT</name>
<comment type="subunit">
    <text evidence="1">Homodimer and heterodimers.</text>
</comment>
<comment type="subcellular location">
    <subcellularLocation>
        <location evidence="1">Cell membrane</location>
        <topology evidence="1">Multi-pass membrane protein</topology>
    </subcellularLocation>
</comment>
<comment type="similarity">
    <text evidence="3">Belongs to the Casparian strip membrane proteins (CASP) family.</text>
</comment>
<dbReference type="EMBL" id="HO412053">
    <property type="status" value="NOT_ANNOTATED_CDS"/>
    <property type="molecule type" value="mRNA"/>
</dbReference>
<dbReference type="SMR" id="P0DI73"/>
<dbReference type="GO" id="GO:0005886">
    <property type="term" value="C:plasma membrane"/>
    <property type="evidence" value="ECO:0007669"/>
    <property type="project" value="UniProtKB-SubCell"/>
</dbReference>
<dbReference type="InterPro" id="IPR008253">
    <property type="entry name" value="Marvel"/>
</dbReference>
<dbReference type="PROSITE" id="PS51225">
    <property type="entry name" value="MARVEL"/>
    <property type="match status" value="1"/>
</dbReference>
<protein>
    <recommendedName>
        <fullName>CASP-like protein 0U2</fullName>
        <shortName>CaCASPL0U2</shortName>
    </recommendedName>
</protein>
<proteinExistence type="evidence at transcript level"/>
<organism>
    <name type="scientific">Chlorokybus atmophyticus</name>
    <name type="common">Soil alga</name>
    <dbReference type="NCBI Taxonomy" id="3144"/>
    <lineage>
        <taxon>Eukaryota</taxon>
        <taxon>Viridiplantae</taxon>
        <taxon>Streptophyta</taxon>
        <taxon>Chlorokybophyceae</taxon>
        <taxon>Chlorokybales</taxon>
        <taxon>Chlorokybaceae</taxon>
        <taxon>Chlorokybus</taxon>
    </lineage>
</organism>
<keyword id="KW-1003">Cell membrane</keyword>
<keyword id="KW-0472">Membrane</keyword>
<keyword id="KW-0812">Transmembrane</keyword>
<keyword id="KW-1133">Transmembrane helix</keyword>